<feature type="chain" id="PRO_1000066391" description="Carbamoyl phosphate synthase large chain">
    <location>
        <begin position="1"/>
        <end position="1105"/>
    </location>
</feature>
<feature type="domain" description="ATP-grasp 1" evidence="1">
    <location>
        <begin position="133"/>
        <end position="328"/>
    </location>
</feature>
<feature type="domain" description="ATP-grasp 2" evidence="1">
    <location>
        <begin position="667"/>
        <end position="858"/>
    </location>
</feature>
<feature type="domain" description="MGS-like" evidence="1">
    <location>
        <begin position="940"/>
        <end position="1101"/>
    </location>
</feature>
<feature type="region of interest" description="Carboxyphosphate synthetic domain" evidence="1">
    <location>
        <begin position="1"/>
        <end position="402"/>
    </location>
</feature>
<feature type="region of interest" description="Oligomerization domain" evidence="1">
    <location>
        <begin position="403"/>
        <end position="542"/>
    </location>
</feature>
<feature type="region of interest" description="Carbamoyl phosphate synthetic domain" evidence="1">
    <location>
        <begin position="543"/>
        <end position="945"/>
    </location>
</feature>
<feature type="region of interest" description="Allosteric domain" evidence="1">
    <location>
        <begin position="946"/>
        <end position="1105"/>
    </location>
</feature>
<feature type="binding site" evidence="1">
    <location>
        <position position="129"/>
    </location>
    <ligand>
        <name>ATP</name>
        <dbReference type="ChEBI" id="CHEBI:30616"/>
        <label>1</label>
    </ligand>
</feature>
<feature type="binding site" evidence="1">
    <location>
        <position position="169"/>
    </location>
    <ligand>
        <name>ATP</name>
        <dbReference type="ChEBI" id="CHEBI:30616"/>
        <label>1</label>
    </ligand>
</feature>
<feature type="binding site" evidence="1">
    <location>
        <position position="175"/>
    </location>
    <ligand>
        <name>ATP</name>
        <dbReference type="ChEBI" id="CHEBI:30616"/>
        <label>1</label>
    </ligand>
</feature>
<feature type="binding site" evidence="1">
    <location>
        <position position="176"/>
    </location>
    <ligand>
        <name>ATP</name>
        <dbReference type="ChEBI" id="CHEBI:30616"/>
        <label>1</label>
    </ligand>
</feature>
<feature type="binding site" evidence="1">
    <location>
        <position position="208"/>
    </location>
    <ligand>
        <name>ATP</name>
        <dbReference type="ChEBI" id="CHEBI:30616"/>
        <label>1</label>
    </ligand>
</feature>
<feature type="binding site" evidence="1">
    <location>
        <position position="210"/>
    </location>
    <ligand>
        <name>ATP</name>
        <dbReference type="ChEBI" id="CHEBI:30616"/>
        <label>1</label>
    </ligand>
</feature>
<feature type="binding site" evidence="1">
    <location>
        <position position="215"/>
    </location>
    <ligand>
        <name>ATP</name>
        <dbReference type="ChEBI" id="CHEBI:30616"/>
        <label>1</label>
    </ligand>
</feature>
<feature type="binding site" evidence="1">
    <location>
        <position position="241"/>
    </location>
    <ligand>
        <name>ATP</name>
        <dbReference type="ChEBI" id="CHEBI:30616"/>
        <label>1</label>
    </ligand>
</feature>
<feature type="binding site" evidence="1">
    <location>
        <position position="242"/>
    </location>
    <ligand>
        <name>ATP</name>
        <dbReference type="ChEBI" id="CHEBI:30616"/>
        <label>1</label>
    </ligand>
</feature>
<feature type="binding site" evidence="1">
    <location>
        <position position="243"/>
    </location>
    <ligand>
        <name>ATP</name>
        <dbReference type="ChEBI" id="CHEBI:30616"/>
        <label>1</label>
    </ligand>
</feature>
<feature type="binding site" evidence="1">
    <location>
        <position position="285"/>
    </location>
    <ligand>
        <name>ATP</name>
        <dbReference type="ChEBI" id="CHEBI:30616"/>
        <label>1</label>
    </ligand>
</feature>
<feature type="binding site" evidence="1">
    <location>
        <position position="285"/>
    </location>
    <ligand>
        <name>Mg(2+)</name>
        <dbReference type="ChEBI" id="CHEBI:18420"/>
        <label>1</label>
    </ligand>
</feature>
<feature type="binding site" evidence="1">
    <location>
        <position position="285"/>
    </location>
    <ligand>
        <name>Mn(2+)</name>
        <dbReference type="ChEBI" id="CHEBI:29035"/>
        <label>1</label>
    </ligand>
</feature>
<feature type="binding site" evidence="1">
    <location>
        <position position="299"/>
    </location>
    <ligand>
        <name>ATP</name>
        <dbReference type="ChEBI" id="CHEBI:30616"/>
        <label>1</label>
    </ligand>
</feature>
<feature type="binding site" evidence="1">
    <location>
        <position position="299"/>
    </location>
    <ligand>
        <name>Mg(2+)</name>
        <dbReference type="ChEBI" id="CHEBI:18420"/>
        <label>1</label>
    </ligand>
</feature>
<feature type="binding site" evidence="1">
    <location>
        <position position="299"/>
    </location>
    <ligand>
        <name>Mg(2+)</name>
        <dbReference type="ChEBI" id="CHEBI:18420"/>
        <label>2</label>
    </ligand>
</feature>
<feature type="binding site" evidence="1">
    <location>
        <position position="299"/>
    </location>
    <ligand>
        <name>Mn(2+)</name>
        <dbReference type="ChEBI" id="CHEBI:29035"/>
        <label>1</label>
    </ligand>
</feature>
<feature type="binding site" evidence="1">
    <location>
        <position position="299"/>
    </location>
    <ligand>
        <name>Mn(2+)</name>
        <dbReference type="ChEBI" id="CHEBI:29035"/>
        <label>2</label>
    </ligand>
</feature>
<feature type="binding site" evidence="1">
    <location>
        <position position="301"/>
    </location>
    <ligand>
        <name>Mg(2+)</name>
        <dbReference type="ChEBI" id="CHEBI:18420"/>
        <label>2</label>
    </ligand>
</feature>
<feature type="binding site" evidence="1">
    <location>
        <position position="301"/>
    </location>
    <ligand>
        <name>Mn(2+)</name>
        <dbReference type="ChEBI" id="CHEBI:29035"/>
        <label>2</label>
    </ligand>
</feature>
<feature type="binding site" evidence="1">
    <location>
        <position position="703"/>
    </location>
    <ligand>
        <name>ATP</name>
        <dbReference type="ChEBI" id="CHEBI:30616"/>
        <label>2</label>
    </ligand>
</feature>
<feature type="binding site" evidence="1">
    <location>
        <position position="742"/>
    </location>
    <ligand>
        <name>ATP</name>
        <dbReference type="ChEBI" id="CHEBI:30616"/>
        <label>2</label>
    </ligand>
</feature>
<feature type="binding site" evidence="1">
    <location>
        <position position="744"/>
    </location>
    <ligand>
        <name>ATP</name>
        <dbReference type="ChEBI" id="CHEBI:30616"/>
        <label>2</label>
    </ligand>
</feature>
<feature type="binding site" evidence="1">
    <location>
        <position position="749"/>
    </location>
    <ligand>
        <name>ATP</name>
        <dbReference type="ChEBI" id="CHEBI:30616"/>
        <label>2</label>
    </ligand>
</feature>
<feature type="binding site" evidence="1">
    <location>
        <position position="774"/>
    </location>
    <ligand>
        <name>ATP</name>
        <dbReference type="ChEBI" id="CHEBI:30616"/>
        <label>2</label>
    </ligand>
</feature>
<feature type="binding site" evidence="1">
    <location>
        <position position="775"/>
    </location>
    <ligand>
        <name>ATP</name>
        <dbReference type="ChEBI" id="CHEBI:30616"/>
        <label>2</label>
    </ligand>
</feature>
<feature type="binding site" evidence="1">
    <location>
        <position position="776"/>
    </location>
    <ligand>
        <name>ATP</name>
        <dbReference type="ChEBI" id="CHEBI:30616"/>
        <label>2</label>
    </ligand>
</feature>
<feature type="binding site" evidence="1">
    <location>
        <position position="777"/>
    </location>
    <ligand>
        <name>ATP</name>
        <dbReference type="ChEBI" id="CHEBI:30616"/>
        <label>2</label>
    </ligand>
</feature>
<feature type="binding site" evidence="1">
    <location>
        <position position="817"/>
    </location>
    <ligand>
        <name>ATP</name>
        <dbReference type="ChEBI" id="CHEBI:30616"/>
        <label>2</label>
    </ligand>
</feature>
<feature type="binding site" evidence="1">
    <location>
        <position position="817"/>
    </location>
    <ligand>
        <name>Mg(2+)</name>
        <dbReference type="ChEBI" id="CHEBI:18420"/>
        <label>3</label>
    </ligand>
</feature>
<feature type="binding site" evidence="1">
    <location>
        <position position="817"/>
    </location>
    <ligand>
        <name>Mn(2+)</name>
        <dbReference type="ChEBI" id="CHEBI:29035"/>
        <label>3</label>
    </ligand>
</feature>
<feature type="binding site" evidence="1">
    <location>
        <position position="829"/>
    </location>
    <ligand>
        <name>ATP</name>
        <dbReference type="ChEBI" id="CHEBI:30616"/>
        <label>2</label>
    </ligand>
</feature>
<feature type="binding site" evidence="1">
    <location>
        <position position="829"/>
    </location>
    <ligand>
        <name>Mg(2+)</name>
        <dbReference type="ChEBI" id="CHEBI:18420"/>
        <label>3</label>
    </ligand>
</feature>
<feature type="binding site" evidence="1">
    <location>
        <position position="829"/>
    </location>
    <ligand>
        <name>Mg(2+)</name>
        <dbReference type="ChEBI" id="CHEBI:18420"/>
        <label>4</label>
    </ligand>
</feature>
<feature type="binding site" evidence="1">
    <location>
        <position position="829"/>
    </location>
    <ligand>
        <name>Mn(2+)</name>
        <dbReference type="ChEBI" id="CHEBI:29035"/>
        <label>3</label>
    </ligand>
</feature>
<feature type="binding site" evidence="1">
    <location>
        <position position="829"/>
    </location>
    <ligand>
        <name>Mn(2+)</name>
        <dbReference type="ChEBI" id="CHEBI:29035"/>
        <label>4</label>
    </ligand>
</feature>
<feature type="binding site" evidence="1">
    <location>
        <position position="831"/>
    </location>
    <ligand>
        <name>Mg(2+)</name>
        <dbReference type="ChEBI" id="CHEBI:18420"/>
        <label>4</label>
    </ligand>
</feature>
<feature type="binding site" evidence="1">
    <location>
        <position position="831"/>
    </location>
    <ligand>
        <name>Mn(2+)</name>
        <dbReference type="ChEBI" id="CHEBI:29035"/>
        <label>4</label>
    </ligand>
</feature>
<keyword id="KW-0028">Amino-acid biosynthesis</keyword>
<keyword id="KW-0055">Arginine biosynthesis</keyword>
<keyword id="KW-0067">ATP-binding</keyword>
<keyword id="KW-0436">Ligase</keyword>
<keyword id="KW-0460">Magnesium</keyword>
<keyword id="KW-0464">Manganese</keyword>
<keyword id="KW-0479">Metal-binding</keyword>
<keyword id="KW-0547">Nucleotide-binding</keyword>
<keyword id="KW-0665">Pyrimidine biosynthesis</keyword>
<keyword id="KW-1185">Reference proteome</keyword>
<keyword id="KW-0677">Repeat</keyword>
<sequence length="1105" mass="122480">MPKRDDIEKVLVIGSGPITIGQAAEFDYSGAQAIKALKSLGYRVVVINSNSATIMTDPEFSDAVYIEPLTIDFLEAVIEKERPDALLPTLGGQTALNLAVELFKKGVLCKYDVELIGVKPDTIEKAEDREQFKTAMKNCGLEVLESRLVSSVTEAMDVVREFGYPVVIRPSFTLGGSGGGIAYNLQELKAIVENGLIESPAHTVLIEKSVIGWKEYELEVMKDHEDNFIVVCSIENFDPMGIHTGDSVTVAPAQTLTDVEYQCMRNAARKALSAIGFDAGGCNIQFAVDTYTGKLVIIEMNPRVSRSSALASKATGYPIAKISALLAVGLRLDEIPNSITEQTTAAFEPSIDYVVVKMPRFQMEKFPGAEQKLGTQMKSVGEVMSIGRTFKEALGKAVRSLELDIAPKLDLRNMREHLANPTSERMSYIFAAFRNSLSVDEVHELTFINKWFLTEIEEIMNFEKVLRKKKPKDFGSLKKAKEFGFSDRELAEIYKVQEEEIRKIRHKLGVTPVYKMVDTCSAEFEAKTPYFYSTYNGMENETIPSKRRKIMVLGSGPNRIGQGIEFDYANVHAVWAFQEEGYEVIMVNSNPETVSTDYDISDKLYFEPLTTEDILEIAKIENPDGIVVSFGGQTPLRIARALEKEGLKILAANYELIDLTESRDRFAKFLKQSGLSVPPFSVARSIKEALRAAELIGFPVLIRPSYVLGGRAMAIVDHKKDLLSYISNASLISPDHPLIIDKFLENAVELDVDVISDGENVWIAGLMEQIEKAGIHSGDSACVLPPVSLSDDLIEKIEHLIYRLIKSLKIIGPANIQLAVKDDKVYVIELNLRASRTIPFVSKAIGIPVAKIAAKTIIGKKLSQLLLRYWPYSTKERLVKYEPARSGVLPTPWPEYYSVKEAIIPFNKFSGVDILLGPEMRSTGEVMGIGDDFAEAFAKAQLSADGISTKSLLVTVNDRDKREIVPLVSYLYDLGFEVFATAGTGKILRSMGIAVKNVFKVGEGKPDVVDLIRQGKIGFIVITQSPNRKTSAEINREAENSFADDERTAGYKIRTAAIQCKVPCITTIEAFRAEVSAIRRLKKSTLSVRSLQDIFYAQQNTLLKK</sequence>
<organism>
    <name type="scientific">Pseudothermotoga lettingae (strain ATCC BAA-301 / DSM 14385 / NBRC 107922 / TMO)</name>
    <name type="common">Thermotoga lettingae</name>
    <dbReference type="NCBI Taxonomy" id="416591"/>
    <lineage>
        <taxon>Bacteria</taxon>
        <taxon>Thermotogati</taxon>
        <taxon>Thermotogota</taxon>
        <taxon>Thermotogae</taxon>
        <taxon>Thermotogales</taxon>
        <taxon>Thermotogaceae</taxon>
        <taxon>Pseudothermotoga</taxon>
    </lineage>
</organism>
<comment type="function">
    <text evidence="1">Large subunit of the glutamine-dependent carbamoyl phosphate synthetase (CPSase). CPSase catalyzes the formation of carbamoyl phosphate from the ammonia moiety of glutamine, carbonate, and phosphate donated by ATP, constituting the first step of 2 biosynthetic pathways, one leading to arginine and/or urea and the other to pyrimidine nucleotides. The large subunit (synthetase) binds the substrates ammonia (free or transferred from glutamine from the small subunit), hydrogencarbonate and ATP and carries out an ATP-coupled ligase reaction, activating hydrogencarbonate by forming carboxy phosphate which reacts with ammonia to form carbamoyl phosphate.</text>
</comment>
<comment type="catalytic activity">
    <reaction evidence="1">
        <text>hydrogencarbonate + L-glutamine + 2 ATP + H2O = carbamoyl phosphate + L-glutamate + 2 ADP + phosphate + 2 H(+)</text>
        <dbReference type="Rhea" id="RHEA:18633"/>
        <dbReference type="ChEBI" id="CHEBI:15377"/>
        <dbReference type="ChEBI" id="CHEBI:15378"/>
        <dbReference type="ChEBI" id="CHEBI:17544"/>
        <dbReference type="ChEBI" id="CHEBI:29985"/>
        <dbReference type="ChEBI" id="CHEBI:30616"/>
        <dbReference type="ChEBI" id="CHEBI:43474"/>
        <dbReference type="ChEBI" id="CHEBI:58228"/>
        <dbReference type="ChEBI" id="CHEBI:58359"/>
        <dbReference type="ChEBI" id="CHEBI:456216"/>
        <dbReference type="EC" id="6.3.5.5"/>
    </reaction>
</comment>
<comment type="catalytic activity">
    <molecule>Carbamoyl phosphate synthase large chain</molecule>
    <reaction evidence="1">
        <text>hydrogencarbonate + NH4(+) + 2 ATP = carbamoyl phosphate + 2 ADP + phosphate + 2 H(+)</text>
        <dbReference type="Rhea" id="RHEA:18029"/>
        <dbReference type="ChEBI" id="CHEBI:15378"/>
        <dbReference type="ChEBI" id="CHEBI:17544"/>
        <dbReference type="ChEBI" id="CHEBI:28938"/>
        <dbReference type="ChEBI" id="CHEBI:30616"/>
        <dbReference type="ChEBI" id="CHEBI:43474"/>
        <dbReference type="ChEBI" id="CHEBI:58228"/>
        <dbReference type="ChEBI" id="CHEBI:456216"/>
        <dbReference type="EC" id="6.3.4.16"/>
    </reaction>
</comment>
<comment type="cofactor">
    <cofactor evidence="1">
        <name>Mg(2+)</name>
        <dbReference type="ChEBI" id="CHEBI:18420"/>
    </cofactor>
    <cofactor evidence="1">
        <name>Mn(2+)</name>
        <dbReference type="ChEBI" id="CHEBI:29035"/>
    </cofactor>
    <text evidence="1">Binds 4 Mg(2+) or Mn(2+) ions per subunit.</text>
</comment>
<comment type="pathway">
    <text evidence="1">Amino-acid biosynthesis; L-arginine biosynthesis; carbamoyl phosphate from bicarbonate: step 1/1.</text>
</comment>
<comment type="pathway">
    <text evidence="1">Pyrimidine metabolism; UMP biosynthesis via de novo pathway; (S)-dihydroorotate from bicarbonate: step 1/3.</text>
</comment>
<comment type="subunit">
    <text evidence="1">Composed of two chains; the small (or glutamine) chain promotes the hydrolysis of glutamine to ammonia, which is used by the large (or ammonia) chain to synthesize carbamoyl phosphate. Tetramer of heterodimers (alpha,beta)4.</text>
</comment>
<comment type="domain">
    <text evidence="1">The large subunit is composed of 2 ATP-grasp domains that are involved in binding the 2 ATP molecules needed for carbamoyl phosphate synthesis. The N-terminal ATP-grasp domain (referred to as the carboxyphosphate synthetic component) catalyzes the ATP-dependent phosphorylation of hydrogencarbonate to carboxyphosphate and the subsequent nucleophilic attack by ammonia to form a carbamate intermediate. The C-terminal ATP-grasp domain (referred to as the carbamoyl phosphate synthetic component) then catalyzes the phosphorylation of carbamate with the second ATP to form the end product carbamoyl phosphate. The reactive and unstable enzyme intermediates are sequentially channeled from one active site to the next through the interior of the protein over a distance of at least 96 A.</text>
</comment>
<comment type="similarity">
    <text evidence="1">Belongs to the CarB family.</text>
</comment>
<gene>
    <name evidence="1" type="primary">carB</name>
    <name type="ordered locus">Tlet_0370</name>
</gene>
<evidence type="ECO:0000255" key="1">
    <source>
        <dbReference type="HAMAP-Rule" id="MF_01210"/>
    </source>
</evidence>
<protein>
    <recommendedName>
        <fullName evidence="1">Carbamoyl phosphate synthase large chain</fullName>
        <ecNumber evidence="1">6.3.4.16</ecNumber>
        <ecNumber evidence="1">6.3.5.5</ecNumber>
    </recommendedName>
    <alternativeName>
        <fullName evidence="1">Carbamoyl phosphate synthetase ammonia chain</fullName>
    </alternativeName>
</protein>
<name>CARB_PSELT</name>
<proteinExistence type="inferred from homology"/>
<reference key="1">
    <citation type="submission" date="2007-08" db="EMBL/GenBank/DDBJ databases">
        <title>Complete sequence of Thermotoga lettingae TMO.</title>
        <authorList>
            <consortium name="US DOE Joint Genome Institute"/>
            <person name="Copeland A."/>
            <person name="Lucas S."/>
            <person name="Lapidus A."/>
            <person name="Barry K."/>
            <person name="Glavina del Rio T."/>
            <person name="Dalin E."/>
            <person name="Tice H."/>
            <person name="Pitluck S."/>
            <person name="Foster B."/>
            <person name="Bruce D."/>
            <person name="Schmutz J."/>
            <person name="Larimer F."/>
            <person name="Land M."/>
            <person name="Hauser L."/>
            <person name="Kyrpides N."/>
            <person name="Mikhailova N."/>
            <person name="Nelson K."/>
            <person name="Gogarten J.P."/>
            <person name="Noll K."/>
            <person name="Richardson P."/>
        </authorList>
    </citation>
    <scope>NUCLEOTIDE SEQUENCE [LARGE SCALE GENOMIC DNA]</scope>
    <source>
        <strain>ATCC BAA-301 / DSM 14385 / NBRC 107922 / TMO</strain>
    </source>
</reference>
<accession>A8F453</accession>
<dbReference type="EC" id="6.3.4.16" evidence="1"/>
<dbReference type="EC" id="6.3.5.5" evidence="1"/>
<dbReference type="EMBL" id="CP000812">
    <property type="protein sequence ID" value="ABV32937.1"/>
    <property type="molecule type" value="Genomic_DNA"/>
</dbReference>
<dbReference type="RefSeq" id="WP_012002418.1">
    <property type="nucleotide sequence ID" value="NZ_BSDV01000001.1"/>
</dbReference>
<dbReference type="SMR" id="A8F453"/>
<dbReference type="STRING" id="416591.Tlet_0370"/>
<dbReference type="KEGG" id="tle:Tlet_0370"/>
<dbReference type="eggNOG" id="COG0458">
    <property type="taxonomic scope" value="Bacteria"/>
</dbReference>
<dbReference type="HOGENOM" id="CLU_000513_1_0_0"/>
<dbReference type="OrthoDB" id="9804197at2"/>
<dbReference type="UniPathway" id="UPA00068">
    <property type="reaction ID" value="UER00171"/>
</dbReference>
<dbReference type="UniPathway" id="UPA00070">
    <property type="reaction ID" value="UER00115"/>
</dbReference>
<dbReference type="Proteomes" id="UP000002016">
    <property type="component" value="Chromosome"/>
</dbReference>
<dbReference type="GO" id="GO:0005737">
    <property type="term" value="C:cytoplasm"/>
    <property type="evidence" value="ECO:0007669"/>
    <property type="project" value="TreeGrafter"/>
</dbReference>
<dbReference type="GO" id="GO:0005524">
    <property type="term" value="F:ATP binding"/>
    <property type="evidence" value="ECO:0007669"/>
    <property type="project" value="UniProtKB-UniRule"/>
</dbReference>
<dbReference type="GO" id="GO:0004087">
    <property type="term" value="F:carbamoyl-phosphate synthase (ammonia) activity"/>
    <property type="evidence" value="ECO:0007669"/>
    <property type="project" value="RHEA"/>
</dbReference>
<dbReference type="GO" id="GO:0004088">
    <property type="term" value="F:carbamoyl-phosphate synthase (glutamine-hydrolyzing) activity"/>
    <property type="evidence" value="ECO:0007669"/>
    <property type="project" value="UniProtKB-UniRule"/>
</dbReference>
<dbReference type="GO" id="GO:0046872">
    <property type="term" value="F:metal ion binding"/>
    <property type="evidence" value="ECO:0007669"/>
    <property type="project" value="UniProtKB-KW"/>
</dbReference>
<dbReference type="GO" id="GO:0044205">
    <property type="term" value="P:'de novo' UMP biosynthetic process"/>
    <property type="evidence" value="ECO:0007669"/>
    <property type="project" value="UniProtKB-UniRule"/>
</dbReference>
<dbReference type="GO" id="GO:0006541">
    <property type="term" value="P:glutamine metabolic process"/>
    <property type="evidence" value="ECO:0007669"/>
    <property type="project" value="TreeGrafter"/>
</dbReference>
<dbReference type="GO" id="GO:0006526">
    <property type="term" value="P:L-arginine biosynthetic process"/>
    <property type="evidence" value="ECO:0007669"/>
    <property type="project" value="UniProtKB-UniRule"/>
</dbReference>
<dbReference type="CDD" id="cd01424">
    <property type="entry name" value="MGS_CPS_II"/>
    <property type="match status" value="1"/>
</dbReference>
<dbReference type="FunFam" id="1.10.1030.10:FF:000002">
    <property type="entry name" value="Carbamoyl-phosphate synthase large chain"/>
    <property type="match status" value="1"/>
</dbReference>
<dbReference type="FunFam" id="3.30.470.20:FF:000007">
    <property type="entry name" value="Carbamoyl-phosphate synthase large chain"/>
    <property type="match status" value="1"/>
</dbReference>
<dbReference type="FunFam" id="3.30.470.20:FF:000026">
    <property type="entry name" value="Carbamoyl-phosphate synthase large chain"/>
    <property type="match status" value="1"/>
</dbReference>
<dbReference type="FunFam" id="3.40.50.20:FF:000001">
    <property type="entry name" value="Carbamoyl-phosphate synthase large chain"/>
    <property type="match status" value="1"/>
</dbReference>
<dbReference type="FunFam" id="3.40.50.20:FF:000002">
    <property type="entry name" value="Carbamoyl-phosphate synthase large chain"/>
    <property type="match status" value="1"/>
</dbReference>
<dbReference type="Gene3D" id="3.40.50.20">
    <property type="match status" value="2"/>
</dbReference>
<dbReference type="Gene3D" id="3.30.1490.20">
    <property type="entry name" value="ATP-grasp fold, A domain"/>
    <property type="match status" value="1"/>
</dbReference>
<dbReference type="Gene3D" id="3.30.470.20">
    <property type="entry name" value="ATP-grasp fold, B domain"/>
    <property type="match status" value="2"/>
</dbReference>
<dbReference type="Gene3D" id="1.10.1030.10">
    <property type="entry name" value="Carbamoyl-phosphate synthetase, large subunit oligomerisation domain"/>
    <property type="match status" value="1"/>
</dbReference>
<dbReference type="Gene3D" id="3.40.50.1380">
    <property type="entry name" value="Methylglyoxal synthase-like domain"/>
    <property type="match status" value="1"/>
</dbReference>
<dbReference type="HAMAP" id="MF_01210_B">
    <property type="entry name" value="CPSase_L_chain_B"/>
    <property type="match status" value="1"/>
</dbReference>
<dbReference type="InterPro" id="IPR011761">
    <property type="entry name" value="ATP-grasp"/>
</dbReference>
<dbReference type="InterPro" id="IPR013815">
    <property type="entry name" value="ATP_grasp_subdomain_1"/>
</dbReference>
<dbReference type="InterPro" id="IPR006275">
    <property type="entry name" value="CarbamoylP_synth_lsu"/>
</dbReference>
<dbReference type="InterPro" id="IPR005480">
    <property type="entry name" value="CarbamoylP_synth_lsu_oligo"/>
</dbReference>
<dbReference type="InterPro" id="IPR036897">
    <property type="entry name" value="CarbamoylP_synth_lsu_oligo_sf"/>
</dbReference>
<dbReference type="InterPro" id="IPR005479">
    <property type="entry name" value="CbamoylP_synth_lsu-like_ATP-bd"/>
</dbReference>
<dbReference type="InterPro" id="IPR005483">
    <property type="entry name" value="CbamoylP_synth_lsu_CPSase_dom"/>
</dbReference>
<dbReference type="InterPro" id="IPR011607">
    <property type="entry name" value="MGS-like_dom"/>
</dbReference>
<dbReference type="InterPro" id="IPR036914">
    <property type="entry name" value="MGS-like_dom_sf"/>
</dbReference>
<dbReference type="InterPro" id="IPR033937">
    <property type="entry name" value="MGS_CPS_CarB"/>
</dbReference>
<dbReference type="InterPro" id="IPR016185">
    <property type="entry name" value="PreATP-grasp_dom_sf"/>
</dbReference>
<dbReference type="NCBIfam" id="TIGR01369">
    <property type="entry name" value="CPSaseII_lrg"/>
    <property type="match status" value="1"/>
</dbReference>
<dbReference type="NCBIfam" id="NF003671">
    <property type="entry name" value="PRK05294.1"/>
    <property type="match status" value="1"/>
</dbReference>
<dbReference type="NCBIfam" id="NF009455">
    <property type="entry name" value="PRK12815.1"/>
    <property type="match status" value="1"/>
</dbReference>
<dbReference type="PANTHER" id="PTHR11405:SF53">
    <property type="entry name" value="CARBAMOYL-PHOSPHATE SYNTHASE [AMMONIA], MITOCHONDRIAL"/>
    <property type="match status" value="1"/>
</dbReference>
<dbReference type="PANTHER" id="PTHR11405">
    <property type="entry name" value="CARBAMOYLTRANSFERASE FAMILY MEMBER"/>
    <property type="match status" value="1"/>
</dbReference>
<dbReference type="Pfam" id="PF02786">
    <property type="entry name" value="CPSase_L_D2"/>
    <property type="match status" value="2"/>
</dbReference>
<dbReference type="Pfam" id="PF02787">
    <property type="entry name" value="CPSase_L_D3"/>
    <property type="match status" value="1"/>
</dbReference>
<dbReference type="Pfam" id="PF02142">
    <property type="entry name" value="MGS"/>
    <property type="match status" value="1"/>
</dbReference>
<dbReference type="PRINTS" id="PR00098">
    <property type="entry name" value="CPSASE"/>
</dbReference>
<dbReference type="SMART" id="SM01096">
    <property type="entry name" value="CPSase_L_D3"/>
    <property type="match status" value="1"/>
</dbReference>
<dbReference type="SMART" id="SM00851">
    <property type="entry name" value="MGS"/>
    <property type="match status" value="1"/>
</dbReference>
<dbReference type="SUPFAM" id="SSF48108">
    <property type="entry name" value="Carbamoyl phosphate synthetase, large subunit connection domain"/>
    <property type="match status" value="1"/>
</dbReference>
<dbReference type="SUPFAM" id="SSF56059">
    <property type="entry name" value="Glutathione synthetase ATP-binding domain-like"/>
    <property type="match status" value="2"/>
</dbReference>
<dbReference type="SUPFAM" id="SSF52335">
    <property type="entry name" value="Methylglyoxal synthase-like"/>
    <property type="match status" value="1"/>
</dbReference>
<dbReference type="SUPFAM" id="SSF52440">
    <property type="entry name" value="PreATP-grasp domain"/>
    <property type="match status" value="2"/>
</dbReference>
<dbReference type="PROSITE" id="PS50975">
    <property type="entry name" value="ATP_GRASP"/>
    <property type="match status" value="2"/>
</dbReference>
<dbReference type="PROSITE" id="PS00866">
    <property type="entry name" value="CPSASE_1"/>
    <property type="match status" value="2"/>
</dbReference>
<dbReference type="PROSITE" id="PS00867">
    <property type="entry name" value="CPSASE_2"/>
    <property type="match status" value="2"/>
</dbReference>
<dbReference type="PROSITE" id="PS51855">
    <property type="entry name" value="MGS"/>
    <property type="match status" value="1"/>
</dbReference>